<organism>
    <name type="scientific">Oryza sativa subsp. indica</name>
    <name type="common">Rice</name>
    <dbReference type="NCBI Taxonomy" id="39946"/>
    <lineage>
        <taxon>Eukaryota</taxon>
        <taxon>Viridiplantae</taxon>
        <taxon>Streptophyta</taxon>
        <taxon>Embryophyta</taxon>
        <taxon>Tracheophyta</taxon>
        <taxon>Spermatophyta</taxon>
        <taxon>Magnoliopsida</taxon>
        <taxon>Liliopsida</taxon>
        <taxon>Poales</taxon>
        <taxon>Poaceae</taxon>
        <taxon>BOP clade</taxon>
        <taxon>Oryzoideae</taxon>
        <taxon>Oryzeae</taxon>
        <taxon>Oryzinae</taxon>
        <taxon>Oryza</taxon>
        <taxon>Oryza sativa</taxon>
    </lineage>
</organism>
<evidence type="ECO:0000255" key="1"/>
<evidence type="ECO:0000305" key="2"/>
<dbReference type="EMBL" id="AY896773">
    <property type="protein sequence ID" value="AAW80678.1"/>
    <property type="molecule type" value="Genomic_DNA"/>
</dbReference>
<dbReference type="EnsemblPlants" id="OsIR64_05g0011890.01">
    <property type="protein sequence ID" value="OsIR64_05g0011890.01"/>
    <property type="gene ID" value="OsIR64_05g0011890"/>
</dbReference>
<dbReference type="EnsemblPlants" id="OsPr106_05g0012150.01">
    <property type="protein sequence ID" value="OsPr106_05g0012150.01"/>
    <property type="gene ID" value="OsPr106_05g0012150"/>
</dbReference>
<dbReference type="Gramene" id="OsIR64_05g0011890.01">
    <property type="protein sequence ID" value="OsIR64_05g0011890.01"/>
    <property type="gene ID" value="OsIR64_05g0011890"/>
</dbReference>
<dbReference type="Gramene" id="OsPr106_05g0012150.01">
    <property type="protein sequence ID" value="OsPr106_05g0012150.01"/>
    <property type="gene ID" value="OsPr106_05g0012150"/>
</dbReference>
<dbReference type="GO" id="GO:0033095">
    <property type="term" value="C:aleurone grain"/>
    <property type="evidence" value="ECO:0007669"/>
    <property type="project" value="UniProtKB-SubCell"/>
</dbReference>
<dbReference type="GO" id="GO:0005773">
    <property type="term" value="C:vacuole"/>
    <property type="evidence" value="ECO:0007669"/>
    <property type="project" value="UniProtKB-KW"/>
</dbReference>
<dbReference type="GO" id="GO:0045735">
    <property type="term" value="F:nutrient reservoir activity"/>
    <property type="evidence" value="ECO:0007669"/>
    <property type="project" value="UniProtKB-KW"/>
</dbReference>
<dbReference type="InterPro" id="IPR036312">
    <property type="entry name" value="Bifun_inhib/LTP/seed_sf"/>
</dbReference>
<dbReference type="InterPro" id="IPR016140">
    <property type="entry name" value="Bifunc_inhib/LTP/seed_store"/>
</dbReference>
<dbReference type="InterPro" id="IPR001954">
    <property type="entry name" value="Glia_glutenin"/>
</dbReference>
<dbReference type="PANTHER" id="PTHR33454">
    <property type="entry name" value="PROLAMIN PPROL 14P"/>
    <property type="match status" value="1"/>
</dbReference>
<dbReference type="PANTHER" id="PTHR33454:SF19">
    <property type="entry name" value="PROLAMIN PPROL 14P"/>
    <property type="match status" value="1"/>
</dbReference>
<dbReference type="Pfam" id="PF13016">
    <property type="entry name" value="Gliadin"/>
    <property type="match status" value="1"/>
</dbReference>
<dbReference type="SUPFAM" id="SSF47699">
    <property type="entry name" value="Bifunctional inhibitor/lipid-transfer protein/seed storage 2S albumin"/>
    <property type="match status" value="1"/>
</dbReference>
<name>PRO7_ORYSI</name>
<proteinExistence type="inferred from homology"/>
<sequence>MKIIFVFALLAIAACSASAQFDVLGQSYRQYQLQSPVLLQQQVLSPYNEFVRQQYGIAASPFLQSAAFQLRNNQVWQQLALVAQQSHYQDINIVQAIAQQLQLQQFGDLYFDRNLAQAQALLAFNVPSRYGIYPRYYGAPSTITTLGGVL</sequence>
<protein>
    <recommendedName>
        <fullName>Prolamin PPROL 14E</fullName>
    </recommendedName>
    <alternativeName>
        <fullName>Prolamin PPROL 14</fullName>
    </alternativeName>
    <alternativeName>
        <fullName>Prolamin PPROL 4A</fullName>
    </alternativeName>
    <alternativeName>
        <fullName>Prolamin PPROL 7</fullName>
    </alternativeName>
</protein>
<keyword id="KW-0873">Pyrrolidone carboxylic acid</keyword>
<keyword id="KW-0708">Seed storage protein</keyword>
<keyword id="KW-0732">Signal</keyword>
<keyword id="KW-0758">Storage protein</keyword>
<keyword id="KW-0926">Vacuole</keyword>
<accession>P0C5E5</accession>
<accession>O49179</accession>
<accession>P19085</accession>
<accession>P20696</accession>
<accession>P20697</accession>
<accession>Q5EFA5</accession>
<accession>Q5W6A0</accession>
<accession>Q9S737</accession>
<reference key="1">
    <citation type="submission" date="2005-01" db="EMBL/GenBank/DDBJ databases">
        <title>Oryza sativa (indica cultivar-group) prolamin gene.</title>
        <authorList>
            <person name="Kim W.S."/>
            <person name="Krishnan H.B."/>
        </authorList>
    </citation>
    <scope>NUCLEOTIDE SEQUENCE [GENOMIC DNA]</scope>
    <source>
        <strain>cv. IR64</strain>
    </source>
</reference>
<feature type="signal peptide" evidence="1">
    <location>
        <begin position="1"/>
        <end position="19"/>
    </location>
</feature>
<feature type="chain" id="PRO_0000303006" description="Prolamin PPROL 14E">
    <location>
        <begin position="20"/>
        <end position="150"/>
    </location>
</feature>
<feature type="modified residue" description="Pyrrolidone carboxylic acid" evidence="1">
    <location>
        <position position="20"/>
    </location>
</feature>
<comment type="function">
    <text>Seed storage protein; serves as a source of nitrogen, carbon and sulfur for the young developing seedling.</text>
</comment>
<comment type="subcellular location">
    <subcellularLocation>
        <location>Vacuole</location>
        <location>Aleurone grain</location>
    </subcellularLocation>
    <text>In rice, prolamin accumulates as a type I protein body which originates directly from the endoplasmic reticulum.</text>
</comment>
<comment type="miscellaneous">
    <text>Lacks significant tandem repetitive sequences.</text>
</comment>
<comment type="similarity">
    <text evidence="2">Belongs to the prolamin family.</text>
</comment>